<feature type="peptide" id="PRO_0000043912" description="Paralytic peptide 2">
    <location>
        <begin position="1"/>
        <end position="23"/>
    </location>
</feature>
<feature type="disulfide bond" evidence="1">
    <location>
        <begin position="7"/>
        <end position="19"/>
    </location>
</feature>
<feature type="strand" evidence="3">
    <location>
        <begin position="11"/>
        <end position="14"/>
    </location>
</feature>
<feature type="turn" evidence="3">
    <location>
        <begin position="15"/>
        <end position="17"/>
    </location>
</feature>
<feature type="strand" evidence="3">
    <location>
        <begin position="18"/>
        <end position="21"/>
    </location>
</feature>
<evidence type="ECO:0000250" key="1"/>
<evidence type="ECO:0000305" key="2"/>
<evidence type="ECO:0007829" key="3">
    <source>
        <dbReference type="PDB" id="1V28"/>
    </source>
</evidence>
<protein>
    <recommendedName>
        <fullName>Paralytic peptide 2</fullName>
    </recommendedName>
    <alternativeName>
        <fullName>Paralytic peptide II</fullName>
        <shortName>PP II</shortName>
    </alternativeName>
</protein>
<keyword id="KW-0002">3D-structure</keyword>
<keyword id="KW-0202">Cytokine</keyword>
<keyword id="KW-0903">Direct protein sequencing</keyword>
<keyword id="KW-1015">Disulfide bond</keyword>
<dbReference type="PIR" id="B39855">
    <property type="entry name" value="B39855"/>
</dbReference>
<dbReference type="PDB" id="1V28">
    <property type="method" value="NMR"/>
    <property type="chains" value="A=1-23"/>
</dbReference>
<dbReference type="PDBsum" id="1V28"/>
<dbReference type="SMR" id="P30254"/>
<dbReference type="EvolutionaryTrace" id="P30254"/>
<dbReference type="GO" id="GO:0005615">
    <property type="term" value="C:extracellular space"/>
    <property type="evidence" value="ECO:0007669"/>
    <property type="project" value="UniProtKB-KW"/>
</dbReference>
<dbReference type="GO" id="GO:0005125">
    <property type="term" value="F:cytokine activity"/>
    <property type="evidence" value="ECO:0007669"/>
    <property type="project" value="UniProtKB-KW"/>
</dbReference>
<dbReference type="InterPro" id="IPR003463">
    <property type="entry name" value="GBP_PSP"/>
</dbReference>
<dbReference type="Pfam" id="PF02425">
    <property type="entry name" value="GBP_PSP"/>
    <property type="match status" value="1"/>
</dbReference>
<organism>
    <name type="scientific">Manduca sexta</name>
    <name type="common">Tobacco hawkmoth</name>
    <name type="synonym">Tobacco hornworm</name>
    <dbReference type="NCBI Taxonomy" id="7130"/>
    <lineage>
        <taxon>Eukaryota</taxon>
        <taxon>Metazoa</taxon>
        <taxon>Ecdysozoa</taxon>
        <taxon>Arthropoda</taxon>
        <taxon>Hexapoda</taxon>
        <taxon>Insecta</taxon>
        <taxon>Pterygota</taxon>
        <taxon>Neoptera</taxon>
        <taxon>Endopterygota</taxon>
        <taxon>Lepidoptera</taxon>
        <taxon>Glossata</taxon>
        <taxon>Ditrysia</taxon>
        <taxon>Bombycoidea</taxon>
        <taxon>Sphingidae</taxon>
        <taxon>Sphinginae</taxon>
        <taxon>Sphingini</taxon>
        <taxon>Manduca</taxon>
    </lineage>
</organism>
<comment type="function">
    <text>Causes rapid, rigid paralysis when injected into Lepidopteran larvae. The physiological role may be to reduce hemolymph loss following injury and promote wound healing.</text>
</comment>
<comment type="tissue specificity">
    <text>Hemolymph.</text>
</comment>
<comment type="similarity">
    <text evidence="2">Belongs to the GBP/PSP1/paralytic peptide family.</text>
</comment>
<proteinExistence type="evidence at protein level"/>
<sequence>ENFAGGCATGFLRTADGRCKPTF</sequence>
<reference key="1">
    <citation type="journal article" date="1991" name="J. Biol. Chem.">
        <title>Isolation and identification of paralytic peptides from hemolymph of the lepidopteran insects Manduca sexta, Spodoptera exigua, and Heliothis virescens.</title>
        <authorList>
            <person name="Skinner W.S."/>
            <person name="Dennis P.A."/>
            <person name="Li J.P."/>
            <person name="Summerfelt R.M."/>
            <person name="Carney R.L."/>
            <person name="Quistad G.B."/>
        </authorList>
    </citation>
    <scope>PROTEIN SEQUENCE</scope>
    <source>
        <tissue>Hemolymph</tissue>
    </source>
</reference>
<accession>P30254</accession>
<name>PAP2_MANSE</name>